<proteinExistence type="inferred from homology"/>
<name>CMR1_PHANO</name>
<protein>
    <recommendedName>
        <fullName evidence="1">DNA damage-binding protein CMR1</fullName>
    </recommendedName>
</protein>
<evidence type="ECO:0000250" key="1">
    <source>
        <dbReference type="UniProtKB" id="Q12510"/>
    </source>
</evidence>
<evidence type="ECO:0000255" key="2"/>
<evidence type="ECO:0000256" key="3">
    <source>
        <dbReference type="SAM" id="MobiDB-lite"/>
    </source>
</evidence>
<evidence type="ECO:0000305" key="4"/>
<comment type="function">
    <text evidence="1">DNA-binding protein that binds to both single- and double-stranded DNA. Binds preferentially to UV-damaged DNA. May be involved in DNA-metabolic processes.</text>
</comment>
<comment type="similarity">
    <text evidence="4">Belongs to the WD repeat DDB2/WDR76 family.</text>
</comment>
<sequence length="519" mass="57482">MARGKNVELSEYERKRQENIAKTQALLRNLEMEAAEAGLGPTGKSRAAASSKPRVKKPAPKKIKQEDIAPRRTSSRLKGIEADSEKAKRKAEDEYVAIKEADRAKRQRVSDAFNFSDIVVAGKDWNRSGNFLSIGPANPYERTFDFDDVKETTDKELRALREKMSGLQLWEDFEPNEIKITPERIYAMGMHPTTEKPLVFAGDKLGNLGICDASQKVAEVKQEDDEDADNEGPTITTLKPHTRTIHTFQFSPHDSNALYSASYDSSVRKLDLAKGVAVEVYGPSDPNEDQPLSGLEISKDDANTLYFSTLDGRFGIYDMRTPSDQAELFQLSEKKIGGFSLHPQQPHLVATASLDRTLKIWDLRKISGKGDSRLPALVGEHESRLSVSHAAWNSAGQVATASYDDTIKIHDFSKSAEWATGTALTDADMKPSVVVPHNNQTGRWVTILRAQWQQFPQDGVQRFCIGNMNRFVDIYTAKGQQLAQLGGDGITAVPAVAKFHPTLDWVAAGTASGKLCLWM</sequence>
<keyword id="KW-0227">DNA damage</keyword>
<keyword id="KW-0238">DNA-binding</keyword>
<keyword id="KW-0677">Repeat</keyword>
<keyword id="KW-0853">WD repeat</keyword>
<organism>
    <name type="scientific">Phaeosphaeria nodorum (strain SN15 / ATCC MYA-4574 / FGSC 10173)</name>
    <name type="common">Glume blotch fungus</name>
    <name type="synonym">Parastagonospora nodorum</name>
    <dbReference type="NCBI Taxonomy" id="321614"/>
    <lineage>
        <taxon>Eukaryota</taxon>
        <taxon>Fungi</taxon>
        <taxon>Dikarya</taxon>
        <taxon>Ascomycota</taxon>
        <taxon>Pezizomycotina</taxon>
        <taxon>Dothideomycetes</taxon>
        <taxon>Pleosporomycetidae</taxon>
        <taxon>Pleosporales</taxon>
        <taxon>Pleosporineae</taxon>
        <taxon>Phaeosphaeriaceae</taxon>
        <taxon>Parastagonospora</taxon>
    </lineage>
</organism>
<reference key="1">
    <citation type="journal article" date="2007" name="Plant Cell">
        <title>Dothideomycete-plant interactions illuminated by genome sequencing and EST analysis of the wheat pathogen Stagonospora nodorum.</title>
        <authorList>
            <person name="Hane J.K."/>
            <person name="Lowe R.G.T."/>
            <person name="Solomon P.S."/>
            <person name="Tan K.-C."/>
            <person name="Schoch C.L."/>
            <person name="Spatafora J.W."/>
            <person name="Crous P.W."/>
            <person name="Kodira C.D."/>
            <person name="Birren B.W."/>
            <person name="Galagan J.E."/>
            <person name="Torriani S.F.F."/>
            <person name="McDonald B.A."/>
            <person name="Oliver R.P."/>
        </authorList>
    </citation>
    <scope>NUCLEOTIDE SEQUENCE [LARGE SCALE GENOMIC DNA]</scope>
    <source>
        <strain>SN15 / ATCC MYA-4574 / FGSC 10173</strain>
    </source>
</reference>
<feature type="chain" id="PRO_0000351112" description="DNA damage-binding protein CMR1">
    <location>
        <begin position="1"/>
        <end position="519"/>
    </location>
</feature>
<feature type="repeat" description="WD 1" evidence="2">
    <location>
        <begin position="240"/>
        <end position="280"/>
    </location>
</feature>
<feature type="repeat" description="WD 2" evidence="2">
    <location>
        <begin position="287"/>
        <end position="327"/>
    </location>
</feature>
<feature type="repeat" description="WD 3" evidence="2">
    <location>
        <begin position="331"/>
        <end position="371"/>
    </location>
</feature>
<feature type="repeat" description="WD 4" evidence="2">
    <location>
        <begin position="380"/>
        <end position="420"/>
    </location>
</feature>
<feature type="repeat" description="WD 5" evidence="2">
    <location>
        <begin position="442"/>
        <end position="485"/>
    </location>
</feature>
<feature type="repeat" description="WD 6" evidence="2">
    <location>
        <begin position="488"/>
        <end position="519"/>
    </location>
</feature>
<feature type="region of interest" description="Disordered" evidence="3">
    <location>
        <begin position="35"/>
        <end position="92"/>
    </location>
</feature>
<feature type="compositionally biased region" description="Basic residues" evidence="3">
    <location>
        <begin position="53"/>
        <end position="62"/>
    </location>
</feature>
<feature type="compositionally biased region" description="Basic and acidic residues" evidence="3">
    <location>
        <begin position="78"/>
        <end position="92"/>
    </location>
</feature>
<accession>Q0UYV9</accession>
<gene>
    <name type="ORF">SNOG_03055</name>
</gene>
<dbReference type="EMBL" id="CH445328">
    <property type="protein sequence ID" value="EAT89786.1"/>
    <property type="molecule type" value="Genomic_DNA"/>
</dbReference>
<dbReference type="RefSeq" id="XP_001793644.1">
    <property type="nucleotide sequence ID" value="XM_001793592.1"/>
</dbReference>
<dbReference type="SMR" id="Q0UYV9"/>
<dbReference type="FunCoup" id="Q0UYV9">
    <property type="interactions" value="625"/>
</dbReference>
<dbReference type="STRING" id="321614.Q0UYV9"/>
<dbReference type="EnsemblFungi" id="SNOT_03055">
    <property type="protein sequence ID" value="SNOT_03055"/>
    <property type="gene ID" value="SNOG_03055"/>
</dbReference>
<dbReference type="GeneID" id="5970501"/>
<dbReference type="KEGG" id="pno:SNOG_03055"/>
<dbReference type="VEuPathDB" id="FungiDB:JI435_030550"/>
<dbReference type="eggNOG" id="KOG4328">
    <property type="taxonomic scope" value="Eukaryota"/>
</dbReference>
<dbReference type="HOGENOM" id="CLU_017019_1_1_1"/>
<dbReference type="InParanoid" id="Q0UYV9"/>
<dbReference type="OMA" id="DPNTLYW"/>
<dbReference type="OrthoDB" id="9890280at2759"/>
<dbReference type="Proteomes" id="UP000001055">
    <property type="component" value="Unassembled WGS sequence"/>
</dbReference>
<dbReference type="GO" id="GO:0000785">
    <property type="term" value="C:chromatin"/>
    <property type="evidence" value="ECO:0007669"/>
    <property type="project" value="EnsemblFungi"/>
</dbReference>
<dbReference type="GO" id="GO:0005737">
    <property type="term" value="C:cytoplasm"/>
    <property type="evidence" value="ECO:0007669"/>
    <property type="project" value="EnsemblFungi"/>
</dbReference>
<dbReference type="GO" id="GO:0034399">
    <property type="term" value="C:nuclear periphery"/>
    <property type="evidence" value="ECO:0007669"/>
    <property type="project" value="EnsemblFungi"/>
</dbReference>
<dbReference type="GO" id="GO:0005634">
    <property type="term" value="C:nucleus"/>
    <property type="evidence" value="ECO:0000318"/>
    <property type="project" value="GO_Central"/>
</dbReference>
<dbReference type="GO" id="GO:0003677">
    <property type="term" value="F:DNA binding"/>
    <property type="evidence" value="ECO:0000318"/>
    <property type="project" value="GO_Central"/>
</dbReference>
<dbReference type="GO" id="GO:0006974">
    <property type="term" value="P:DNA damage response"/>
    <property type="evidence" value="ECO:0007669"/>
    <property type="project" value="UniProtKB-KW"/>
</dbReference>
<dbReference type="GO" id="GO:2000001">
    <property type="term" value="P:regulation of DNA damage checkpoint"/>
    <property type="evidence" value="ECO:0000318"/>
    <property type="project" value="GO_Central"/>
</dbReference>
<dbReference type="FunFam" id="2.130.10.10:FF:000562">
    <property type="entry name" value="DNA damage-binding protein CMR1"/>
    <property type="match status" value="1"/>
</dbReference>
<dbReference type="Gene3D" id="2.130.10.10">
    <property type="entry name" value="YVTN repeat-like/Quinoprotein amine dehydrogenase"/>
    <property type="match status" value="1"/>
</dbReference>
<dbReference type="InterPro" id="IPR015943">
    <property type="entry name" value="WD40/YVTN_repeat-like_dom_sf"/>
</dbReference>
<dbReference type="InterPro" id="IPR019775">
    <property type="entry name" value="WD40_repeat_CS"/>
</dbReference>
<dbReference type="InterPro" id="IPR036322">
    <property type="entry name" value="WD40_repeat_dom_sf"/>
</dbReference>
<dbReference type="InterPro" id="IPR001680">
    <property type="entry name" value="WD40_rpt"/>
</dbReference>
<dbReference type="InterPro" id="IPR050853">
    <property type="entry name" value="WD_repeat_DNA-damage-binding"/>
</dbReference>
<dbReference type="PANTHER" id="PTHR14773">
    <property type="entry name" value="WD REPEAT-CONTAINING PROTEIN 76"/>
    <property type="match status" value="1"/>
</dbReference>
<dbReference type="PANTHER" id="PTHR14773:SF0">
    <property type="entry name" value="WD REPEAT-CONTAINING PROTEIN 76"/>
    <property type="match status" value="1"/>
</dbReference>
<dbReference type="Pfam" id="PF00400">
    <property type="entry name" value="WD40"/>
    <property type="match status" value="3"/>
</dbReference>
<dbReference type="SMART" id="SM00320">
    <property type="entry name" value="WD40"/>
    <property type="match status" value="4"/>
</dbReference>
<dbReference type="SUPFAM" id="SSF50978">
    <property type="entry name" value="WD40 repeat-like"/>
    <property type="match status" value="1"/>
</dbReference>
<dbReference type="PROSITE" id="PS00678">
    <property type="entry name" value="WD_REPEATS_1"/>
    <property type="match status" value="1"/>
</dbReference>
<dbReference type="PROSITE" id="PS50082">
    <property type="entry name" value="WD_REPEATS_2"/>
    <property type="match status" value="1"/>
</dbReference>
<dbReference type="PROSITE" id="PS50294">
    <property type="entry name" value="WD_REPEATS_REGION"/>
    <property type="match status" value="1"/>
</dbReference>